<protein>
    <recommendedName>
        <fullName>Zinc finger CCCH-type with G patch domain-containing protein</fullName>
    </recommendedName>
</protein>
<keyword id="KW-0238">DNA-binding</keyword>
<keyword id="KW-0479">Metal-binding</keyword>
<keyword id="KW-0539">Nucleus</keyword>
<keyword id="KW-1185">Reference proteome</keyword>
<keyword id="KW-0678">Repressor</keyword>
<keyword id="KW-0804">Transcription</keyword>
<keyword id="KW-0805">Transcription regulation</keyword>
<keyword id="KW-0862">Zinc</keyword>
<keyword id="KW-0863">Zinc-finger</keyword>
<comment type="function">
    <text evidence="1">Transcription repressor that specifically binds the 5'-GGAG[GA]A[GA]A-3' consensus sequence. Represses transcription by recruiting the chromatin multiprotein complex NuRD to target promoters. Negatively regulates expression of EGFR, a gene involved in cell proliferation, survival and migration (By similarity).</text>
</comment>
<comment type="subcellular location">
    <subcellularLocation>
        <location evidence="1">Nucleus</location>
    </subcellularLocation>
</comment>
<name>ZGPAT_XENLA</name>
<organism>
    <name type="scientific">Xenopus laevis</name>
    <name type="common">African clawed frog</name>
    <dbReference type="NCBI Taxonomy" id="8355"/>
    <lineage>
        <taxon>Eukaryota</taxon>
        <taxon>Metazoa</taxon>
        <taxon>Chordata</taxon>
        <taxon>Craniata</taxon>
        <taxon>Vertebrata</taxon>
        <taxon>Euteleostomi</taxon>
        <taxon>Amphibia</taxon>
        <taxon>Batrachia</taxon>
        <taxon>Anura</taxon>
        <taxon>Pipoidea</taxon>
        <taxon>Pipidae</taxon>
        <taxon>Xenopodinae</taxon>
        <taxon>Xenopus</taxon>
        <taxon>Xenopus</taxon>
    </lineage>
</organism>
<dbReference type="EMBL" id="BC084897">
    <property type="protein sequence ID" value="AAH84897.1"/>
    <property type="molecule type" value="mRNA"/>
</dbReference>
<dbReference type="RefSeq" id="NP_001088537.1">
    <property type="nucleotide sequence ID" value="NM_001095068.1"/>
</dbReference>
<dbReference type="SMR" id="Q5U4Z3"/>
<dbReference type="DNASU" id="495411"/>
<dbReference type="GeneID" id="495411"/>
<dbReference type="KEGG" id="xla:495411"/>
<dbReference type="CTD" id="495411"/>
<dbReference type="Xenbase" id="XB-GENE-6253853">
    <property type="gene designation" value="zgpat.L"/>
</dbReference>
<dbReference type="OrthoDB" id="4822at2759"/>
<dbReference type="Proteomes" id="UP000186698">
    <property type="component" value="Chromosome 9_10L"/>
</dbReference>
<dbReference type="GO" id="GO:0005634">
    <property type="term" value="C:nucleus"/>
    <property type="evidence" value="ECO:0000250"/>
    <property type="project" value="UniProtKB"/>
</dbReference>
<dbReference type="GO" id="GO:0003700">
    <property type="term" value="F:DNA-binding transcription factor activity"/>
    <property type="evidence" value="ECO:0000250"/>
    <property type="project" value="UniProtKB"/>
</dbReference>
<dbReference type="GO" id="GO:0001227">
    <property type="term" value="F:DNA-binding transcription repressor activity, RNA polymerase II-specific"/>
    <property type="evidence" value="ECO:0000318"/>
    <property type="project" value="GO_Central"/>
</dbReference>
<dbReference type="GO" id="GO:0000978">
    <property type="term" value="F:RNA polymerase II cis-regulatory region sequence-specific DNA binding"/>
    <property type="evidence" value="ECO:0000318"/>
    <property type="project" value="GO_Central"/>
</dbReference>
<dbReference type="GO" id="GO:0043565">
    <property type="term" value="F:sequence-specific DNA binding"/>
    <property type="evidence" value="ECO:0000250"/>
    <property type="project" value="UniProtKB"/>
</dbReference>
<dbReference type="GO" id="GO:0008270">
    <property type="term" value="F:zinc ion binding"/>
    <property type="evidence" value="ECO:0007669"/>
    <property type="project" value="UniProtKB-KW"/>
</dbReference>
<dbReference type="GO" id="GO:0045892">
    <property type="term" value="P:negative regulation of DNA-templated transcription"/>
    <property type="evidence" value="ECO:0000250"/>
    <property type="project" value="UniProtKB"/>
</dbReference>
<dbReference type="GO" id="GO:0007175">
    <property type="term" value="P:negative regulation of epidermal growth factor-activated receptor activity"/>
    <property type="evidence" value="ECO:0000250"/>
    <property type="project" value="UniProtKB"/>
</dbReference>
<dbReference type="GO" id="GO:0000122">
    <property type="term" value="P:negative regulation of transcription by RNA polymerase II"/>
    <property type="evidence" value="ECO:0000318"/>
    <property type="project" value="GO_Central"/>
</dbReference>
<dbReference type="CDD" id="cd20384">
    <property type="entry name" value="Tudor_ZGPAT"/>
    <property type="match status" value="1"/>
</dbReference>
<dbReference type="FunFam" id="2.30.30.1190:FF:000001">
    <property type="entry name" value="zinc finger CCCH-type with G patch domain-containing protein"/>
    <property type="match status" value="1"/>
</dbReference>
<dbReference type="Gene3D" id="2.30.30.1190">
    <property type="match status" value="1"/>
</dbReference>
<dbReference type="Gene3D" id="2.30.30.140">
    <property type="match status" value="1"/>
</dbReference>
<dbReference type="InterPro" id="IPR000467">
    <property type="entry name" value="G_patch_dom"/>
</dbReference>
<dbReference type="InterPro" id="IPR000571">
    <property type="entry name" value="Znf_CCCH"/>
</dbReference>
<dbReference type="InterPro" id="IPR036855">
    <property type="entry name" value="Znf_CCCH_sf"/>
</dbReference>
<dbReference type="PANTHER" id="PTHR46297">
    <property type="entry name" value="ZINC FINGER CCCH-TYPE WITH G PATCH DOMAIN-CONTAINING PROTEIN"/>
    <property type="match status" value="1"/>
</dbReference>
<dbReference type="PANTHER" id="PTHR46297:SF1">
    <property type="entry name" value="ZINC FINGER CCCH-TYPE WITH G PATCH DOMAIN-CONTAINING PROTEIN"/>
    <property type="match status" value="1"/>
</dbReference>
<dbReference type="Pfam" id="PF01585">
    <property type="entry name" value="G-patch"/>
    <property type="match status" value="1"/>
</dbReference>
<dbReference type="SMART" id="SM00443">
    <property type="entry name" value="G_patch"/>
    <property type="match status" value="1"/>
</dbReference>
<dbReference type="SMART" id="SM00356">
    <property type="entry name" value="ZnF_C3H1"/>
    <property type="match status" value="1"/>
</dbReference>
<dbReference type="SUPFAM" id="SSF90229">
    <property type="entry name" value="CCCH zinc finger"/>
    <property type="match status" value="1"/>
</dbReference>
<dbReference type="SUPFAM" id="SSF63748">
    <property type="entry name" value="Tudor/PWWP/MBT"/>
    <property type="match status" value="1"/>
</dbReference>
<dbReference type="PROSITE" id="PS50174">
    <property type="entry name" value="G_PATCH"/>
    <property type="match status" value="1"/>
</dbReference>
<dbReference type="PROSITE" id="PS50103">
    <property type="entry name" value="ZF_C3H1"/>
    <property type="match status" value="1"/>
</dbReference>
<feature type="chain" id="PRO_0000385195" description="Zinc finger CCCH-type with G patch domain-containing protein">
    <location>
        <begin position="1"/>
        <end position="524"/>
    </location>
</feature>
<feature type="domain" description="G-patch" evidence="2">
    <location>
        <begin position="326"/>
        <end position="372"/>
    </location>
</feature>
<feature type="zinc finger region" description="C3H1-type" evidence="3">
    <location>
        <begin position="184"/>
        <end position="210"/>
    </location>
</feature>
<feature type="region of interest" description="Disordered" evidence="4">
    <location>
        <begin position="105"/>
        <end position="142"/>
    </location>
</feature>
<feature type="region of interest" description="Disordered" evidence="4">
    <location>
        <begin position="279"/>
        <end position="298"/>
    </location>
</feature>
<feature type="region of interest" description="Disordered" evidence="4">
    <location>
        <begin position="375"/>
        <end position="402"/>
    </location>
</feature>
<feature type="region of interest" description="Disordered" evidence="4">
    <location>
        <begin position="500"/>
        <end position="524"/>
    </location>
</feature>
<feature type="compositionally biased region" description="Polar residues" evidence="4">
    <location>
        <begin position="106"/>
        <end position="122"/>
    </location>
</feature>
<feature type="compositionally biased region" description="Acidic residues" evidence="4">
    <location>
        <begin position="125"/>
        <end position="137"/>
    </location>
</feature>
<feature type="compositionally biased region" description="Basic residues" evidence="4">
    <location>
        <begin position="376"/>
        <end position="393"/>
    </location>
</feature>
<evidence type="ECO:0000250" key="1"/>
<evidence type="ECO:0000255" key="2">
    <source>
        <dbReference type="PROSITE-ProRule" id="PRU00092"/>
    </source>
</evidence>
<evidence type="ECO:0000255" key="3">
    <source>
        <dbReference type="PROSITE-ProRule" id="PRU00723"/>
    </source>
</evidence>
<evidence type="ECO:0000256" key="4">
    <source>
        <dbReference type="SAM" id="MobiDB-lite"/>
    </source>
</evidence>
<reference key="1">
    <citation type="submission" date="2004-10" db="EMBL/GenBank/DDBJ databases">
        <authorList>
            <consortium name="NIH - Xenopus Gene Collection (XGC) project"/>
        </authorList>
    </citation>
    <scope>NUCLEOTIDE SEQUENCE [LARGE SCALE MRNA]</scope>
    <source>
        <tissue>Liver</tissue>
    </source>
</reference>
<accession>Q5U4Z3</accession>
<gene>
    <name type="primary">zgpat</name>
</gene>
<sequence>MDEESLAAALQTYRAQLEQVDLTLRAVTDPTQLEDLTQLHTDLQQLIELTESSLLSIQKCNLLTSLEGNPSLPFHEDPISLPALEVPTSLSSQDKEYEAFRMAISEESQPLGSNDETSTCSKGSEEEEEEEEEEEDNTSGMKVKAPYYSTWGTLEYHNAMVVGSEQMEDGEAGVRVLYLYPTHKAMKPCPFFLDGKCLFNDNCRFSHGQVVSVTELQPFKEADLGSLAVDSPCLAQHNDGIWYPARITDIESGFYTVKFDSLLLKESVLEADSIIPPLRGSDSSSSSSSDEEEDGAAEDSVYAKVLGQEIAGTTCSSEFGGWEAHTRGIGSKLLVRMGYEFGKGLGRNAEGRVEPIQAVVLPKGKSLDQCMEIQQRKKAGGKHKHKTSKRRPKASGQGGGAKARDIFDFLNEKLEGKFTSACTAETQKTGEKKGKELYNASKDSKRALSVQVAITAEKIKQKQREICHLKESLARNAGRESVISNQLEVRLSGARKELAGLQQEERSLQREQKKADTHKKMTEF</sequence>
<proteinExistence type="evidence at transcript level"/>